<proteinExistence type="inferred from homology"/>
<dbReference type="EMBL" id="AE003849">
    <property type="protein sequence ID" value="AAF85427.1"/>
    <property type="molecule type" value="Genomic_DNA"/>
</dbReference>
<dbReference type="PIR" id="G82534">
    <property type="entry name" value="G82534"/>
</dbReference>
<dbReference type="RefSeq" id="WP_010895047.1">
    <property type="nucleotide sequence ID" value="NC_002488.3"/>
</dbReference>
<dbReference type="SMR" id="Q9PA89"/>
<dbReference type="STRING" id="160492.XF_2630"/>
<dbReference type="KEGG" id="xfa:XF_2630"/>
<dbReference type="eggNOG" id="COG0049">
    <property type="taxonomic scope" value="Bacteria"/>
</dbReference>
<dbReference type="HOGENOM" id="CLU_072226_1_1_6"/>
<dbReference type="Proteomes" id="UP000000812">
    <property type="component" value="Chromosome"/>
</dbReference>
<dbReference type="GO" id="GO:0015935">
    <property type="term" value="C:small ribosomal subunit"/>
    <property type="evidence" value="ECO:0007669"/>
    <property type="project" value="InterPro"/>
</dbReference>
<dbReference type="GO" id="GO:0019843">
    <property type="term" value="F:rRNA binding"/>
    <property type="evidence" value="ECO:0007669"/>
    <property type="project" value="UniProtKB-UniRule"/>
</dbReference>
<dbReference type="GO" id="GO:0003735">
    <property type="term" value="F:structural constituent of ribosome"/>
    <property type="evidence" value="ECO:0007669"/>
    <property type="project" value="InterPro"/>
</dbReference>
<dbReference type="GO" id="GO:0000049">
    <property type="term" value="F:tRNA binding"/>
    <property type="evidence" value="ECO:0007669"/>
    <property type="project" value="UniProtKB-UniRule"/>
</dbReference>
<dbReference type="GO" id="GO:0006412">
    <property type="term" value="P:translation"/>
    <property type="evidence" value="ECO:0007669"/>
    <property type="project" value="UniProtKB-UniRule"/>
</dbReference>
<dbReference type="CDD" id="cd14869">
    <property type="entry name" value="uS7_Bacteria"/>
    <property type="match status" value="1"/>
</dbReference>
<dbReference type="FunFam" id="1.10.455.10:FF:000001">
    <property type="entry name" value="30S ribosomal protein S7"/>
    <property type="match status" value="1"/>
</dbReference>
<dbReference type="Gene3D" id="1.10.455.10">
    <property type="entry name" value="Ribosomal protein S7 domain"/>
    <property type="match status" value="1"/>
</dbReference>
<dbReference type="HAMAP" id="MF_00480_B">
    <property type="entry name" value="Ribosomal_uS7_B"/>
    <property type="match status" value="1"/>
</dbReference>
<dbReference type="InterPro" id="IPR000235">
    <property type="entry name" value="Ribosomal_uS7"/>
</dbReference>
<dbReference type="InterPro" id="IPR005717">
    <property type="entry name" value="Ribosomal_uS7_bac/org-type"/>
</dbReference>
<dbReference type="InterPro" id="IPR020606">
    <property type="entry name" value="Ribosomal_uS7_CS"/>
</dbReference>
<dbReference type="InterPro" id="IPR023798">
    <property type="entry name" value="Ribosomal_uS7_dom"/>
</dbReference>
<dbReference type="InterPro" id="IPR036823">
    <property type="entry name" value="Ribosomal_uS7_dom_sf"/>
</dbReference>
<dbReference type="NCBIfam" id="TIGR01029">
    <property type="entry name" value="rpsG_bact"/>
    <property type="match status" value="1"/>
</dbReference>
<dbReference type="PANTHER" id="PTHR11205">
    <property type="entry name" value="RIBOSOMAL PROTEIN S7"/>
    <property type="match status" value="1"/>
</dbReference>
<dbReference type="Pfam" id="PF00177">
    <property type="entry name" value="Ribosomal_S7"/>
    <property type="match status" value="1"/>
</dbReference>
<dbReference type="PIRSF" id="PIRSF002122">
    <property type="entry name" value="RPS7p_RPS7a_RPS5e_RPS7o"/>
    <property type="match status" value="1"/>
</dbReference>
<dbReference type="SUPFAM" id="SSF47973">
    <property type="entry name" value="Ribosomal protein S7"/>
    <property type="match status" value="1"/>
</dbReference>
<dbReference type="PROSITE" id="PS00052">
    <property type="entry name" value="RIBOSOMAL_S7"/>
    <property type="match status" value="1"/>
</dbReference>
<protein>
    <recommendedName>
        <fullName evidence="1">Small ribosomal subunit protein uS7</fullName>
    </recommendedName>
    <alternativeName>
        <fullName evidence="2">30S ribosomal protein S7</fullName>
    </alternativeName>
</protein>
<accession>Q9PA89</accession>
<comment type="function">
    <text evidence="1">One of the primary rRNA binding proteins, it binds directly to 16S rRNA where it nucleates assembly of the head domain of the 30S subunit. Is located at the subunit interface close to the decoding center, probably blocks exit of the E-site tRNA.</text>
</comment>
<comment type="subunit">
    <text evidence="1">Part of the 30S ribosomal subunit. Contacts proteins S9 and S11.</text>
</comment>
<comment type="similarity">
    <text evidence="1">Belongs to the universal ribosomal protein uS7 family.</text>
</comment>
<sequence>MSRKGSTPQRNVLPDPKYGSETIARFINMVMKSGKKSVAEKIVYGAMNVIGEKNSNAIELLQKALDNVSPAVEVKSRRVGGATYQVPVEVRASRRMALAMRWLIDSSRKRGENSMPHKLAAELLDASESRGGAIKKREETHRMAEANKAFAHYRW</sequence>
<keyword id="KW-0687">Ribonucleoprotein</keyword>
<keyword id="KW-0689">Ribosomal protein</keyword>
<keyword id="KW-0694">RNA-binding</keyword>
<keyword id="KW-0699">rRNA-binding</keyword>
<keyword id="KW-0820">tRNA-binding</keyword>
<evidence type="ECO:0000255" key="1">
    <source>
        <dbReference type="HAMAP-Rule" id="MF_00480"/>
    </source>
</evidence>
<evidence type="ECO:0000305" key="2"/>
<reference key="1">
    <citation type="journal article" date="2000" name="Nature">
        <title>The genome sequence of the plant pathogen Xylella fastidiosa.</title>
        <authorList>
            <person name="Simpson A.J.G."/>
            <person name="Reinach F.C."/>
            <person name="Arruda P."/>
            <person name="Abreu F.A."/>
            <person name="Acencio M."/>
            <person name="Alvarenga R."/>
            <person name="Alves L.M.C."/>
            <person name="Araya J.E."/>
            <person name="Baia G.S."/>
            <person name="Baptista C.S."/>
            <person name="Barros M.H."/>
            <person name="Bonaccorsi E.D."/>
            <person name="Bordin S."/>
            <person name="Bove J.M."/>
            <person name="Briones M.R.S."/>
            <person name="Bueno M.R.P."/>
            <person name="Camargo A.A."/>
            <person name="Camargo L.E.A."/>
            <person name="Carraro D.M."/>
            <person name="Carrer H."/>
            <person name="Colauto N.B."/>
            <person name="Colombo C."/>
            <person name="Costa F.F."/>
            <person name="Costa M.C.R."/>
            <person name="Costa-Neto C.M."/>
            <person name="Coutinho L.L."/>
            <person name="Cristofani M."/>
            <person name="Dias-Neto E."/>
            <person name="Docena C."/>
            <person name="El-Dorry H."/>
            <person name="Facincani A.P."/>
            <person name="Ferreira A.J.S."/>
            <person name="Ferreira V.C.A."/>
            <person name="Ferro J.A."/>
            <person name="Fraga J.S."/>
            <person name="Franca S.C."/>
            <person name="Franco M.C."/>
            <person name="Frohme M."/>
            <person name="Furlan L.R."/>
            <person name="Garnier M."/>
            <person name="Goldman G.H."/>
            <person name="Goldman M.H.S."/>
            <person name="Gomes S.L."/>
            <person name="Gruber A."/>
            <person name="Ho P.L."/>
            <person name="Hoheisel J.D."/>
            <person name="Junqueira M.L."/>
            <person name="Kemper E.L."/>
            <person name="Kitajima J.P."/>
            <person name="Krieger J.E."/>
            <person name="Kuramae E.E."/>
            <person name="Laigret F."/>
            <person name="Lambais M.R."/>
            <person name="Leite L.C.C."/>
            <person name="Lemos E.G.M."/>
            <person name="Lemos M.V.F."/>
            <person name="Lopes S.A."/>
            <person name="Lopes C.R."/>
            <person name="Machado J.A."/>
            <person name="Machado M.A."/>
            <person name="Madeira A.M.B.N."/>
            <person name="Madeira H.M.F."/>
            <person name="Marino C.L."/>
            <person name="Marques M.V."/>
            <person name="Martins E.A.L."/>
            <person name="Martins E.M.F."/>
            <person name="Matsukuma A.Y."/>
            <person name="Menck C.F.M."/>
            <person name="Miracca E.C."/>
            <person name="Miyaki C.Y."/>
            <person name="Monteiro-Vitorello C.B."/>
            <person name="Moon D.H."/>
            <person name="Nagai M.A."/>
            <person name="Nascimento A.L.T.O."/>
            <person name="Netto L.E.S."/>
            <person name="Nhani A. Jr."/>
            <person name="Nobrega F.G."/>
            <person name="Nunes L.R."/>
            <person name="Oliveira M.A."/>
            <person name="de Oliveira M.C."/>
            <person name="de Oliveira R.C."/>
            <person name="Palmieri D.A."/>
            <person name="Paris A."/>
            <person name="Peixoto B.R."/>
            <person name="Pereira G.A.G."/>
            <person name="Pereira H.A. Jr."/>
            <person name="Pesquero J.B."/>
            <person name="Quaggio R.B."/>
            <person name="Roberto P.G."/>
            <person name="Rodrigues V."/>
            <person name="de Rosa A.J.M."/>
            <person name="de Rosa V.E. Jr."/>
            <person name="de Sa R.G."/>
            <person name="Santelli R.V."/>
            <person name="Sawasaki H.E."/>
            <person name="da Silva A.C.R."/>
            <person name="da Silva A.M."/>
            <person name="da Silva F.R."/>
            <person name="Silva W.A. Jr."/>
            <person name="da Silveira J.F."/>
            <person name="Silvestri M.L.Z."/>
            <person name="Siqueira W.J."/>
            <person name="de Souza A.A."/>
            <person name="de Souza A.P."/>
            <person name="Terenzi M.F."/>
            <person name="Truffi D."/>
            <person name="Tsai S.M."/>
            <person name="Tsuhako M.H."/>
            <person name="Vallada H."/>
            <person name="Van Sluys M.A."/>
            <person name="Verjovski-Almeida S."/>
            <person name="Vettore A.L."/>
            <person name="Zago M.A."/>
            <person name="Zatz M."/>
            <person name="Meidanis J."/>
            <person name="Setubal J.C."/>
        </authorList>
    </citation>
    <scope>NUCLEOTIDE SEQUENCE [LARGE SCALE GENOMIC DNA]</scope>
    <source>
        <strain>9a5c</strain>
    </source>
</reference>
<gene>
    <name evidence="1" type="primary">rpsG</name>
    <name type="ordered locus">XF_2630</name>
</gene>
<feature type="chain" id="PRO_0000124386" description="Small ribosomal subunit protein uS7">
    <location>
        <begin position="1"/>
        <end position="155"/>
    </location>
</feature>
<name>RS7_XYLFA</name>
<organism>
    <name type="scientific">Xylella fastidiosa (strain 9a5c)</name>
    <dbReference type="NCBI Taxonomy" id="160492"/>
    <lineage>
        <taxon>Bacteria</taxon>
        <taxon>Pseudomonadati</taxon>
        <taxon>Pseudomonadota</taxon>
        <taxon>Gammaproteobacteria</taxon>
        <taxon>Lysobacterales</taxon>
        <taxon>Lysobacteraceae</taxon>
        <taxon>Xylella</taxon>
    </lineage>
</organism>